<reference key="1">
    <citation type="submission" date="2006-09" db="EMBL/GenBank/DDBJ databases">
        <title>NISC comparative sequencing initiative.</title>
        <authorList>
            <person name="Antonellis A."/>
            <person name="Ayele K."/>
            <person name="Benjamin B."/>
            <person name="Blakesley R.W."/>
            <person name="Boakye A."/>
            <person name="Bouffard G.G."/>
            <person name="Brinkley C."/>
            <person name="Brooks S."/>
            <person name="Chu G."/>
            <person name="Coleman H."/>
            <person name="Engle J."/>
            <person name="Gestole M."/>
            <person name="Greene A."/>
            <person name="Guan X."/>
            <person name="Gupta J."/>
            <person name="Haghighi P."/>
            <person name="Han J."/>
            <person name="Hansen N."/>
            <person name="Ho S.-L."/>
            <person name="Hu P."/>
            <person name="Hunter G."/>
            <person name="Hurle B."/>
            <person name="Idol J.R."/>
            <person name="Kwong P."/>
            <person name="Laric P."/>
            <person name="Larson S."/>
            <person name="Lee-Lin S.-Q."/>
            <person name="Legaspi R."/>
            <person name="Madden M."/>
            <person name="Maduro Q.L."/>
            <person name="Maduro V.B."/>
            <person name="Margulies E.H."/>
            <person name="Masiello C."/>
            <person name="Maskeri B."/>
            <person name="McDowell J."/>
            <person name="Mojidi H.A."/>
            <person name="Mullikin J.C."/>
            <person name="Oestreicher J.S."/>
            <person name="Park M."/>
            <person name="Portnoy M.E."/>
            <person name="Prasad A."/>
            <person name="Puri O."/>
            <person name="Reddix-Dugue N."/>
            <person name="Schandler K."/>
            <person name="Schueler M.G."/>
            <person name="Sison C."/>
            <person name="Stantripop S."/>
            <person name="Stephen E."/>
            <person name="Taye A."/>
            <person name="Thomas J.W."/>
            <person name="Thomas P.J."/>
            <person name="Tsipouri V."/>
            <person name="Ung L."/>
            <person name="Vogt J.L."/>
            <person name="Wetherby K.D."/>
            <person name="Young A."/>
            <person name="Green E.D."/>
        </authorList>
    </citation>
    <scope>NUCLEOTIDE SEQUENCE [LARGE SCALE GENOMIC DNA]</scope>
</reference>
<evidence type="ECO:0000250" key="1"/>
<evidence type="ECO:0000250" key="2">
    <source>
        <dbReference type="UniProtKB" id="P47755"/>
    </source>
</evidence>
<evidence type="ECO:0000305" key="3"/>
<dbReference type="EMBL" id="DP000180">
    <property type="protein sequence ID" value="ABI75304.1"/>
    <property type="molecule type" value="Genomic_DNA"/>
</dbReference>
<dbReference type="RefSeq" id="XP_039328608.1">
    <property type="nucleotide sequence ID" value="XM_039472674.1"/>
</dbReference>
<dbReference type="SMR" id="Q09YH6"/>
<dbReference type="STRING" id="39432.ENSSBOP00000019324"/>
<dbReference type="GeneID" id="101039965"/>
<dbReference type="Proteomes" id="UP000233220">
    <property type="component" value="Whole Genome Shotgun Assembly"/>
</dbReference>
<dbReference type="GO" id="GO:0030863">
    <property type="term" value="C:cortical cytoskeleton"/>
    <property type="evidence" value="ECO:0007669"/>
    <property type="project" value="TreeGrafter"/>
</dbReference>
<dbReference type="GO" id="GO:0008290">
    <property type="term" value="C:F-actin capping protein complex"/>
    <property type="evidence" value="ECO:0007669"/>
    <property type="project" value="InterPro"/>
</dbReference>
<dbReference type="GO" id="GO:0051015">
    <property type="term" value="F:actin filament binding"/>
    <property type="evidence" value="ECO:0007669"/>
    <property type="project" value="TreeGrafter"/>
</dbReference>
<dbReference type="GO" id="GO:0030036">
    <property type="term" value="P:actin cytoskeleton organization"/>
    <property type="evidence" value="ECO:0007669"/>
    <property type="project" value="TreeGrafter"/>
</dbReference>
<dbReference type="GO" id="GO:0051016">
    <property type="term" value="P:barbed-end actin filament capping"/>
    <property type="evidence" value="ECO:0007669"/>
    <property type="project" value="InterPro"/>
</dbReference>
<dbReference type="FunFam" id="3.30.1140.60:FF:000001">
    <property type="entry name" value="F-actin-capping protein subunit alpha"/>
    <property type="match status" value="1"/>
</dbReference>
<dbReference type="FunFam" id="3.90.1150.210:FF:000002">
    <property type="entry name" value="F-actin-capping protein subunit alpha"/>
    <property type="match status" value="1"/>
</dbReference>
<dbReference type="Gene3D" id="3.30.1140.60">
    <property type="entry name" value="F-actin capping protein, alpha subunit"/>
    <property type="match status" value="1"/>
</dbReference>
<dbReference type="Gene3D" id="3.90.1150.210">
    <property type="entry name" value="F-actin capping protein, beta subunit"/>
    <property type="match status" value="1"/>
</dbReference>
<dbReference type="InterPro" id="IPR002189">
    <property type="entry name" value="CapZ_alpha"/>
</dbReference>
<dbReference type="InterPro" id="IPR037282">
    <property type="entry name" value="CapZ_alpha/beta"/>
</dbReference>
<dbReference type="InterPro" id="IPR042276">
    <property type="entry name" value="CapZ_alpha/beta_2"/>
</dbReference>
<dbReference type="InterPro" id="IPR042489">
    <property type="entry name" value="CapZ_alpha_1"/>
</dbReference>
<dbReference type="InterPro" id="IPR017865">
    <property type="entry name" value="F-actin_cap_asu_CS"/>
</dbReference>
<dbReference type="PANTHER" id="PTHR10653">
    <property type="entry name" value="F-ACTIN-CAPPING PROTEIN SUBUNIT ALPHA"/>
    <property type="match status" value="1"/>
</dbReference>
<dbReference type="PANTHER" id="PTHR10653:SF2">
    <property type="entry name" value="F-ACTIN-CAPPING PROTEIN SUBUNIT ALPHA-2"/>
    <property type="match status" value="1"/>
</dbReference>
<dbReference type="Pfam" id="PF01267">
    <property type="entry name" value="F-actin_cap_A"/>
    <property type="match status" value="1"/>
</dbReference>
<dbReference type="PRINTS" id="PR00191">
    <property type="entry name" value="FACTINCAPA"/>
</dbReference>
<dbReference type="SUPFAM" id="SSF90096">
    <property type="entry name" value="Subunits of heterodimeric actin filament capping protein Capz"/>
    <property type="match status" value="1"/>
</dbReference>
<dbReference type="PROSITE" id="PS00748">
    <property type="entry name" value="F_ACTIN_CAPPING_A_1"/>
    <property type="match status" value="1"/>
</dbReference>
<dbReference type="PROSITE" id="PS00749">
    <property type="entry name" value="F_ACTIN_CAPPING_A_2"/>
    <property type="match status" value="1"/>
</dbReference>
<name>CAZA2_SAIBB</name>
<proteinExistence type="inferred from homology"/>
<keyword id="KW-0007">Acetylation</keyword>
<keyword id="KW-0117">Actin capping</keyword>
<keyword id="KW-0009">Actin-binding</keyword>
<keyword id="KW-0597">Phosphoprotein</keyword>
<keyword id="KW-1185">Reference proteome</keyword>
<organism>
    <name type="scientific">Saimiri boliviensis boliviensis</name>
    <name type="common">Bolivian squirrel monkey</name>
    <dbReference type="NCBI Taxonomy" id="39432"/>
    <lineage>
        <taxon>Eukaryota</taxon>
        <taxon>Metazoa</taxon>
        <taxon>Chordata</taxon>
        <taxon>Craniata</taxon>
        <taxon>Vertebrata</taxon>
        <taxon>Euteleostomi</taxon>
        <taxon>Mammalia</taxon>
        <taxon>Eutheria</taxon>
        <taxon>Euarchontoglires</taxon>
        <taxon>Primates</taxon>
        <taxon>Haplorrhini</taxon>
        <taxon>Platyrrhini</taxon>
        <taxon>Cebidae</taxon>
        <taxon>Saimiriinae</taxon>
        <taxon>Saimiri</taxon>
    </lineage>
</organism>
<accession>Q09YH6</accession>
<comment type="function">
    <text evidence="1">F-actin-capping proteins bind in a Ca(2+)-independent manner to the fast growing ends of actin filaments (barbed end) thereby blocking the exchange of subunits at these ends. Unlike other capping proteins (such as gelsolin and severin), these proteins do not sever actin filaments (By similarity).</text>
</comment>
<comment type="subunit">
    <text evidence="1">Component of the F-actin capping complex, composed of a heterodimer of an alpha and a beta subunit. Component of the WASH complex, composed of F-actin-capping protein subunit alpha (CAPZA1, CAPZA2 or CAPZA3), F-actin-capping protein subunit beta (CAPZB), WASHC1, WASHC2, WASHC3, WASHC4 and WASHC5. Interacts with RCSD1/CAPZIP (By similarity).</text>
</comment>
<comment type="similarity">
    <text evidence="3">Belongs to the F-actin-capping protein alpha subunit family.</text>
</comment>
<gene>
    <name type="primary">CAPZA2</name>
</gene>
<protein>
    <recommendedName>
        <fullName>F-actin-capping protein subunit alpha-2</fullName>
    </recommendedName>
    <alternativeName>
        <fullName>CapZ alpha-2</fullName>
    </alternativeName>
</protein>
<sequence length="286" mass="32963">MADLEEQLSDEEKVRIAAKFIIHAPPGEFNEVFNDVRLLLNNDNLLREGAAHAFAQYNLDQFTPVKIEGYEDQVLITEHGDLGNGKFLDPKNRICFKFDHLRKEATDPRPCEVENAIESWRTSVETALRAYVKEHYPNGVCTVYGKKIDGQQTIIACIESHQFQAKNFWNGRWRSEWKFTITPSTTQVVGILKIQVHYYEDGNVQLVSHKDIQDSLTVSNEVQTAKEFIKIVEAAENEYQTAISENYQTMSDTTFKALRRQLPVTRTKIDWNKILSYKIGKEMQNA</sequence>
<feature type="initiator methionine" description="Removed" evidence="2">
    <location>
        <position position="1"/>
    </location>
</feature>
<feature type="chain" id="PRO_0000260363" description="F-actin-capping protein subunit alpha-2">
    <location>
        <begin position="2"/>
        <end position="286"/>
    </location>
</feature>
<feature type="modified residue" description="N-acetylalanine" evidence="2">
    <location>
        <position position="2"/>
    </location>
</feature>
<feature type="modified residue" description="Phosphoserine" evidence="2">
    <location>
        <position position="9"/>
    </location>
</feature>